<dbReference type="EC" id="2.4.1.-"/>
<dbReference type="EMBL" id="AB041415">
    <property type="protein sequence ID" value="BAA94500.1"/>
    <property type="molecule type" value="Genomic_DNA"/>
</dbReference>
<dbReference type="SMR" id="Q9N294"/>
<dbReference type="STRING" id="9597.ENSPPAP00000033863"/>
<dbReference type="CAZy" id="GT31">
    <property type="family name" value="Glycosyltransferase Family 31"/>
</dbReference>
<dbReference type="GlyCosmos" id="Q9N294">
    <property type="glycosylation" value="3 sites, No reported glycans"/>
</dbReference>
<dbReference type="eggNOG" id="KOG2287">
    <property type="taxonomic scope" value="Eukaryota"/>
</dbReference>
<dbReference type="UniPathway" id="UPA00378"/>
<dbReference type="Proteomes" id="UP000240080">
    <property type="component" value="Unplaced"/>
</dbReference>
<dbReference type="GO" id="GO:0005783">
    <property type="term" value="C:endoplasmic reticulum"/>
    <property type="evidence" value="ECO:0007669"/>
    <property type="project" value="TreeGrafter"/>
</dbReference>
<dbReference type="GO" id="GO:0000139">
    <property type="term" value="C:Golgi membrane"/>
    <property type="evidence" value="ECO:0007669"/>
    <property type="project" value="UniProtKB-SubCell"/>
</dbReference>
<dbReference type="GO" id="GO:0008499">
    <property type="term" value="F:N-acetyl-beta-D-glucosaminide beta-(1,3)-galactosyltransferase activity"/>
    <property type="evidence" value="ECO:0007669"/>
    <property type="project" value="TreeGrafter"/>
</dbReference>
<dbReference type="GO" id="GO:0006629">
    <property type="term" value="P:lipid metabolic process"/>
    <property type="evidence" value="ECO:0007669"/>
    <property type="project" value="UniProtKB-KW"/>
</dbReference>
<dbReference type="GO" id="GO:0006493">
    <property type="term" value="P:protein O-linked glycosylation"/>
    <property type="evidence" value="ECO:0007669"/>
    <property type="project" value="TreeGrafter"/>
</dbReference>
<dbReference type="FunFam" id="3.90.550.50:FF:000001">
    <property type="entry name" value="Hexosyltransferase"/>
    <property type="match status" value="1"/>
</dbReference>
<dbReference type="Gene3D" id="3.90.550.50">
    <property type="match status" value="1"/>
</dbReference>
<dbReference type="InterPro" id="IPR002659">
    <property type="entry name" value="Glyco_trans_31"/>
</dbReference>
<dbReference type="PANTHER" id="PTHR11214:SF265">
    <property type="entry name" value="BETA-1,3-GALACTOSYLTRANSFERASE 5"/>
    <property type="match status" value="1"/>
</dbReference>
<dbReference type="PANTHER" id="PTHR11214">
    <property type="entry name" value="BETA-1,3-N-ACETYLGLUCOSAMINYLTRANSFERASE"/>
    <property type="match status" value="1"/>
</dbReference>
<dbReference type="Pfam" id="PF01762">
    <property type="entry name" value="Galactosyl_T"/>
    <property type="match status" value="1"/>
</dbReference>
<proteinExistence type="inferred from homology"/>
<sequence length="301" mass="35222">MAFPKMRLMYVCLLVLGALCLYFSMYSLNLFKEQSFVYKKDGNFLKLPDTDCRQTPPFLVLLVTSSHKQLAERMAIRQTWGKERTVKGKQLKTFFLLGTTSSAAETKEVDQESQRHGDIIQKDFLDGYYNLTLKTMMGIEWVHRFCPQAAFVMKTDSDMFINVDYLTELLLKKNRTTRFFTGFLKLNEFPIRQPFSKWFVSKSEYPWDRYPPFCSGTGYVFSGDVASQVYNVSESVPYIKLEDVFVGLCLERLNIRLEELHSQPTFFPGGLRFSVCRFRRIVACHFIKPRTLLDYWQALEN</sequence>
<organism>
    <name type="scientific">Pan paniscus</name>
    <name type="common">Pygmy chimpanzee</name>
    <name type="synonym">Bonobo</name>
    <dbReference type="NCBI Taxonomy" id="9597"/>
    <lineage>
        <taxon>Eukaryota</taxon>
        <taxon>Metazoa</taxon>
        <taxon>Chordata</taxon>
        <taxon>Craniata</taxon>
        <taxon>Vertebrata</taxon>
        <taxon>Euteleostomi</taxon>
        <taxon>Mammalia</taxon>
        <taxon>Eutheria</taxon>
        <taxon>Euarchontoglires</taxon>
        <taxon>Primates</taxon>
        <taxon>Haplorrhini</taxon>
        <taxon>Catarrhini</taxon>
        <taxon>Hominidae</taxon>
        <taxon>Pan</taxon>
    </lineage>
</organism>
<evidence type="ECO:0000250" key="1"/>
<evidence type="ECO:0000250" key="2">
    <source>
        <dbReference type="UniProtKB" id="Q9Y2C3"/>
    </source>
</evidence>
<evidence type="ECO:0000255" key="3"/>
<evidence type="ECO:0000305" key="4"/>
<reference key="1">
    <citation type="submission" date="2000-04" db="EMBL/GenBank/DDBJ databases">
        <authorList>
            <person name="Liu Y."/>
            <person name="Saitou N."/>
        </authorList>
    </citation>
    <scope>NUCLEOTIDE SEQUENCE [GENOMIC DNA]</scope>
</reference>
<name>B3GT5_PANPA</name>
<protein>
    <recommendedName>
        <fullName>Beta-1,3-galactosyltransferase 5</fullName>
        <shortName>Beta-1,3-GalTase 5</shortName>
        <shortName>Beta3Gal-T5</shortName>
        <shortName>Beta3GalT5</shortName>
        <shortName>b3Gal-T5</shortName>
        <ecNumber>2.4.1.-</ecNumber>
    </recommendedName>
    <alternativeName>
        <fullName>Beta-3-Gx-T5</fullName>
    </alternativeName>
    <alternativeName>
        <fullName>UDP-Gal:beta-GlcNAc beta-1,3-galactosyltransferase 5</fullName>
    </alternativeName>
    <alternativeName>
        <fullName>UDP-galactose:beta-N-acetylglucosamine beta-1,3-galactosyltransferase 5</fullName>
    </alternativeName>
</protein>
<comment type="function">
    <text evidence="1">Catalyzes the transfer of Gal to GlcNAc-based acceptors with a preference for the core3 O-linked glycan GlcNAc(beta1,3)GalNAc structure. Can use glycolipid LC3Cer as an efficient acceptor (By similarity).</text>
</comment>
<comment type="catalytic activity">
    <reaction evidence="2">
        <text>a globoside Gb4Cer (d18:1(4E)) + UDP-alpha-D-galactose = a globoside GalGb4Cer (d18:1(4E)) + UDP + H(+)</text>
        <dbReference type="Rhea" id="RHEA:41996"/>
        <dbReference type="ChEBI" id="CHEBI:15378"/>
        <dbReference type="ChEBI" id="CHEBI:18259"/>
        <dbReference type="ChEBI" id="CHEBI:58223"/>
        <dbReference type="ChEBI" id="CHEBI:62571"/>
        <dbReference type="ChEBI" id="CHEBI:66914"/>
    </reaction>
    <physiologicalReaction direction="left-to-right" evidence="2">
        <dbReference type="Rhea" id="RHEA:41997"/>
    </physiologicalReaction>
</comment>
<comment type="pathway">
    <text>Protein modification; protein glycosylation.</text>
</comment>
<comment type="subcellular location">
    <subcellularLocation>
        <location evidence="4">Golgi apparatus membrane</location>
        <topology evidence="4">Single-pass type II membrane protein</topology>
    </subcellularLocation>
</comment>
<comment type="similarity">
    <text evidence="4">Belongs to the glycosyltransferase 31 family.</text>
</comment>
<feature type="chain" id="PRO_0000219166" description="Beta-1,3-galactosyltransferase 5">
    <location>
        <begin position="1"/>
        <end position="301" status="greater than"/>
    </location>
</feature>
<feature type="topological domain" description="Cytoplasmic" evidence="3">
    <location>
        <begin position="1"/>
        <end position="7"/>
    </location>
</feature>
<feature type="transmembrane region" description="Helical; Signal-anchor for type II membrane protein" evidence="3">
    <location>
        <begin position="8"/>
        <end position="28"/>
    </location>
</feature>
<feature type="topological domain" description="Lumenal" evidence="3">
    <location>
        <begin position="29"/>
        <end position="301" status="greater than"/>
    </location>
</feature>
<feature type="glycosylation site" description="N-linked (GlcNAc...) asparagine" evidence="3">
    <location>
        <position position="130"/>
    </location>
</feature>
<feature type="glycosylation site" description="N-linked (GlcNAc...) asparagine" evidence="3">
    <location>
        <position position="174"/>
    </location>
</feature>
<feature type="glycosylation site" description="N-linked (GlcNAc...) asparagine" evidence="3">
    <location>
        <position position="231"/>
    </location>
</feature>
<feature type="non-terminal residue">
    <location>
        <position position="301"/>
    </location>
</feature>
<keyword id="KW-0325">Glycoprotein</keyword>
<keyword id="KW-0328">Glycosyltransferase</keyword>
<keyword id="KW-0333">Golgi apparatus</keyword>
<keyword id="KW-0443">Lipid metabolism</keyword>
<keyword id="KW-0472">Membrane</keyword>
<keyword id="KW-1185">Reference proteome</keyword>
<keyword id="KW-0735">Signal-anchor</keyword>
<keyword id="KW-0808">Transferase</keyword>
<keyword id="KW-0812">Transmembrane</keyword>
<keyword id="KW-1133">Transmembrane helix</keyword>
<accession>Q9N294</accession>
<gene>
    <name type="primary">B3GALT5</name>
</gene>